<feature type="chain" id="PRO_1000030461" description="D-alanine--D-alanine ligase">
    <location>
        <begin position="1"/>
        <end position="351"/>
    </location>
</feature>
<feature type="domain" description="ATP-grasp" evidence="2">
    <location>
        <begin position="135"/>
        <end position="343"/>
    </location>
</feature>
<feature type="binding site" evidence="2">
    <location>
        <begin position="167"/>
        <end position="222"/>
    </location>
    <ligand>
        <name>ATP</name>
        <dbReference type="ChEBI" id="CHEBI:30616"/>
    </ligand>
</feature>
<feature type="binding site" evidence="2">
    <location>
        <position position="298"/>
    </location>
    <ligand>
        <name>Mg(2+)</name>
        <dbReference type="ChEBI" id="CHEBI:18420"/>
        <label>1</label>
    </ligand>
</feature>
<feature type="binding site" evidence="2">
    <location>
        <position position="310"/>
    </location>
    <ligand>
        <name>Mg(2+)</name>
        <dbReference type="ChEBI" id="CHEBI:18420"/>
        <label>1</label>
    </ligand>
</feature>
<feature type="binding site" evidence="2">
    <location>
        <position position="310"/>
    </location>
    <ligand>
        <name>Mg(2+)</name>
        <dbReference type="ChEBI" id="CHEBI:18420"/>
        <label>2</label>
    </ligand>
</feature>
<feature type="binding site" evidence="2">
    <location>
        <position position="312"/>
    </location>
    <ligand>
        <name>Mg(2+)</name>
        <dbReference type="ChEBI" id="CHEBI:18420"/>
        <label>2</label>
    </ligand>
</feature>
<name>DDL_LEPBJ</name>
<protein>
    <recommendedName>
        <fullName evidence="2">D-alanine--D-alanine ligase</fullName>
        <ecNumber evidence="2">6.3.2.4</ecNumber>
    </recommendedName>
    <alternativeName>
        <fullName evidence="2">D-Ala-D-Ala ligase</fullName>
    </alternativeName>
    <alternativeName>
        <fullName evidence="2">D-alanylalanine synthetase</fullName>
    </alternativeName>
</protein>
<sequence>MAKIAVFFGGSSTEHSISIRTGCFICRTLHTMGHSVKPILLTQDGGWVVPLQYRISIPYEAVNSSDLFEEEFQKTNGVSKMDFISNLDADIVFLGLHGGKGEDGSIQGFLRVLGVPYTGSGVAASALAMDKTRANQIFLQSGQKVAPFFEVEKLGYTNSPEETVIKLMSLGFPQFLKPVEGGSSVSTYKITNQEQLSRQLALIFESDSKVMSQSFLAGTEVSCGVLERYRNGKLERIALPATEIVPGGEFFDFESKYKQGGSREITPARISKQEMTRVQELAIDAHTSLGCRGYSRSDFIIVGGEPHILETNTLPGMTETSLIPQQAKAAGITMEEVFADLIEIGLKHSIH</sequence>
<organism>
    <name type="scientific">Leptospira borgpetersenii serovar Hardjo-bovis (strain JB197)</name>
    <dbReference type="NCBI Taxonomy" id="355277"/>
    <lineage>
        <taxon>Bacteria</taxon>
        <taxon>Pseudomonadati</taxon>
        <taxon>Spirochaetota</taxon>
        <taxon>Spirochaetia</taxon>
        <taxon>Leptospirales</taxon>
        <taxon>Leptospiraceae</taxon>
        <taxon>Leptospira</taxon>
    </lineage>
</organism>
<keyword id="KW-0067">ATP-binding</keyword>
<keyword id="KW-0133">Cell shape</keyword>
<keyword id="KW-0961">Cell wall biogenesis/degradation</keyword>
<keyword id="KW-0963">Cytoplasm</keyword>
<keyword id="KW-0436">Ligase</keyword>
<keyword id="KW-0460">Magnesium</keyword>
<keyword id="KW-0464">Manganese</keyword>
<keyword id="KW-0479">Metal-binding</keyword>
<keyword id="KW-0547">Nucleotide-binding</keyword>
<keyword id="KW-0573">Peptidoglycan synthesis</keyword>
<reference key="1">
    <citation type="journal article" date="2006" name="Proc. Natl. Acad. Sci. U.S.A.">
        <title>Genome reduction in Leptospira borgpetersenii reflects limited transmission potential.</title>
        <authorList>
            <person name="Bulach D.M."/>
            <person name="Zuerner R.L."/>
            <person name="Wilson P."/>
            <person name="Seemann T."/>
            <person name="McGrath A."/>
            <person name="Cullen P.A."/>
            <person name="Davis J."/>
            <person name="Johnson M."/>
            <person name="Kuczek E."/>
            <person name="Alt D.P."/>
            <person name="Peterson-Burch B."/>
            <person name="Coppel R.L."/>
            <person name="Rood J.I."/>
            <person name="Davies J.K."/>
            <person name="Adler B."/>
        </authorList>
    </citation>
    <scope>NUCLEOTIDE SEQUENCE [LARGE SCALE GENOMIC DNA]</scope>
    <source>
        <strain>JB197</strain>
    </source>
</reference>
<comment type="function">
    <text evidence="2">Cell wall formation.</text>
</comment>
<comment type="catalytic activity">
    <reaction evidence="2">
        <text>2 D-alanine + ATP = D-alanyl-D-alanine + ADP + phosphate + H(+)</text>
        <dbReference type="Rhea" id="RHEA:11224"/>
        <dbReference type="ChEBI" id="CHEBI:15378"/>
        <dbReference type="ChEBI" id="CHEBI:30616"/>
        <dbReference type="ChEBI" id="CHEBI:43474"/>
        <dbReference type="ChEBI" id="CHEBI:57416"/>
        <dbReference type="ChEBI" id="CHEBI:57822"/>
        <dbReference type="ChEBI" id="CHEBI:456216"/>
        <dbReference type="EC" id="6.3.2.4"/>
    </reaction>
</comment>
<comment type="cofactor">
    <cofactor evidence="1">
        <name>Mg(2+)</name>
        <dbReference type="ChEBI" id="CHEBI:18420"/>
    </cofactor>
    <cofactor evidence="1">
        <name>Mn(2+)</name>
        <dbReference type="ChEBI" id="CHEBI:29035"/>
    </cofactor>
    <text evidence="1">Binds 2 magnesium or manganese ions per subunit.</text>
</comment>
<comment type="pathway">
    <text evidence="2">Cell wall biogenesis; peptidoglycan biosynthesis.</text>
</comment>
<comment type="subcellular location">
    <subcellularLocation>
        <location evidence="2">Cytoplasm</location>
    </subcellularLocation>
</comment>
<comment type="similarity">
    <text evidence="2">Belongs to the D-alanine--D-alanine ligase family.</text>
</comment>
<accession>Q04RK6</accession>
<evidence type="ECO:0000250" key="1"/>
<evidence type="ECO:0000255" key="2">
    <source>
        <dbReference type="HAMAP-Rule" id="MF_00047"/>
    </source>
</evidence>
<gene>
    <name evidence="2" type="primary">ddl</name>
    <name type="ordered locus">LBJ_1946</name>
</gene>
<dbReference type="EC" id="6.3.2.4" evidence="2"/>
<dbReference type="EMBL" id="CP000350">
    <property type="protein sequence ID" value="ABJ76464.1"/>
    <property type="molecule type" value="Genomic_DNA"/>
</dbReference>
<dbReference type="RefSeq" id="WP_002721946.1">
    <property type="nucleotide sequence ID" value="NC_008510.1"/>
</dbReference>
<dbReference type="SMR" id="Q04RK6"/>
<dbReference type="KEGG" id="lbj:LBJ_1946"/>
<dbReference type="HOGENOM" id="CLU_039268_1_1_12"/>
<dbReference type="UniPathway" id="UPA00219"/>
<dbReference type="Proteomes" id="UP000000656">
    <property type="component" value="Chromosome 1"/>
</dbReference>
<dbReference type="GO" id="GO:0005737">
    <property type="term" value="C:cytoplasm"/>
    <property type="evidence" value="ECO:0007669"/>
    <property type="project" value="UniProtKB-SubCell"/>
</dbReference>
<dbReference type="GO" id="GO:0005524">
    <property type="term" value="F:ATP binding"/>
    <property type="evidence" value="ECO:0007669"/>
    <property type="project" value="UniProtKB-KW"/>
</dbReference>
<dbReference type="GO" id="GO:0008716">
    <property type="term" value="F:D-alanine-D-alanine ligase activity"/>
    <property type="evidence" value="ECO:0007669"/>
    <property type="project" value="UniProtKB-UniRule"/>
</dbReference>
<dbReference type="GO" id="GO:0046872">
    <property type="term" value="F:metal ion binding"/>
    <property type="evidence" value="ECO:0007669"/>
    <property type="project" value="UniProtKB-KW"/>
</dbReference>
<dbReference type="GO" id="GO:0071555">
    <property type="term" value="P:cell wall organization"/>
    <property type="evidence" value="ECO:0007669"/>
    <property type="project" value="UniProtKB-KW"/>
</dbReference>
<dbReference type="GO" id="GO:0009252">
    <property type="term" value="P:peptidoglycan biosynthetic process"/>
    <property type="evidence" value="ECO:0007669"/>
    <property type="project" value="UniProtKB-UniRule"/>
</dbReference>
<dbReference type="GO" id="GO:0008360">
    <property type="term" value="P:regulation of cell shape"/>
    <property type="evidence" value="ECO:0007669"/>
    <property type="project" value="UniProtKB-KW"/>
</dbReference>
<dbReference type="Gene3D" id="3.40.50.20">
    <property type="match status" value="1"/>
</dbReference>
<dbReference type="Gene3D" id="3.30.1490.20">
    <property type="entry name" value="ATP-grasp fold, A domain"/>
    <property type="match status" value="1"/>
</dbReference>
<dbReference type="Gene3D" id="3.30.470.20">
    <property type="entry name" value="ATP-grasp fold, B domain"/>
    <property type="match status" value="1"/>
</dbReference>
<dbReference type="HAMAP" id="MF_00047">
    <property type="entry name" value="Dala_Dala_lig"/>
    <property type="match status" value="1"/>
</dbReference>
<dbReference type="InterPro" id="IPR011761">
    <property type="entry name" value="ATP-grasp"/>
</dbReference>
<dbReference type="InterPro" id="IPR013815">
    <property type="entry name" value="ATP_grasp_subdomain_1"/>
</dbReference>
<dbReference type="InterPro" id="IPR000291">
    <property type="entry name" value="D-Ala_lig_Van_CS"/>
</dbReference>
<dbReference type="InterPro" id="IPR005905">
    <property type="entry name" value="D_ala_D_ala"/>
</dbReference>
<dbReference type="InterPro" id="IPR011095">
    <property type="entry name" value="Dala_Dala_lig_C"/>
</dbReference>
<dbReference type="InterPro" id="IPR011127">
    <property type="entry name" value="Dala_Dala_lig_N"/>
</dbReference>
<dbReference type="InterPro" id="IPR016185">
    <property type="entry name" value="PreATP-grasp_dom_sf"/>
</dbReference>
<dbReference type="NCBIfam" id="TIGR01205">
    <property type="entry name" value="D_ala_D_alaTIGR"/>
    <property type="match status" value="1"/>
</dbReference>
<dbReference type="NCBIfam" id="NF002378">
    <property type="entry name" value="PRK01372.1"/>
    <property type="match status" value="1"/>
</dbReference>
<dbReference type="NCBIfam" id="NF011170">
    <property type="entry name" value="PRK14572.1"/>
    <property type="match status" value="1"/>
</dbReference>
<dbReference type="PANTHER" id="PTHR23132">
    <property type="entry name" value="D-ALANINE--D-ALANINE LIGASE"/>
    <property type="match status" value="1"/>
</dbReference>
<dbReference type="PANTHER" id="PTHR23132:SF23">
    <property type="entry name" value="D-ALANINE--D-ALANINE LIGASE B"/>
    <property type="match status" value="1"/>
</dbReference>
<dbReference type="Pfam" id="PF07478">
    <property type="entry name" value="Dala_Dala_lig_C"/>
    <property type="match status" value="1"/>
</dbReference>
<dbReference type="Pfam" id="PF01820">
    <property type="entry name" value="Dala_Dala_lig_N"/>
    <property type="match status" value="1"/>
</dbReference>
<dbReference type="PIRSF" id="PIRSF039102">
    <property type="entry name" value="Ddl/VanB"/>
    <property type="match status" value="1"/>
</dbReference>
<dbReference type="SUPFAM" id="SSF56059">
    <property type="entry name" value="Glutathione synthetase ATP-binding domain-like"/>
    <property type="match status" value="1"/>
</dbReference>
<dbReference type="SUPFAM" id="SSF52440">
    <property type="entry name" value="PreATP-grasp domain"/>
    <property type="match status" value="1"/>
</dbReference>
<dbReference type="PROSITE" id="PS50975">
    <property type="entry name" value="ATP_GRASP"/>
    <property type="match status" value="1"/>
</dbReference>
<dbReference type="PROSITE" id="PS00843">
    <property type="entry name" value="DALA_DALA_LIGASE_1"/>
    <property type="match status" value="1"/>
</dbReference>
<dbReference type="PROSITE" id="PS00844">
    <property type="entry name" value="DALA_DALA_LIGASE_2"/>
    <property type="match status" value="1"/>
</dbReference>
<proteinExistence type="inferred from homology"/>